<protein>
    <recommendedName>
        <fullName>Cytochrome b</fullName>
    </recommendedName>
    <alternativeName>
        <fullName>Complex III subunit 3</fullName>
    </alternativeName>
    <alternativeName>
        <fullName>Complex III subunit III</fullName>
    </alternativeName>
    <alternativeName>
        <fullName>Cytochrome b-c1 complex subunit 3</fullName>
    </alternativeName>
    <alternativeName>
        <fullName>Ubiquinol-cytochrome-c reductase complex cytochrome b subunit</fullName>
    </alternativeName>
</protein>
<gene>
    <name type="primary">MT-CYB</name>
    <name type="synonym">COB</name>
    <name type="synonym">CYTB</name>
    <name type="synonym">MTCYB</name>
</gene>
<geneLocation type="mitochondrion"/>
<feature type="chain" id="PRO_0000255071" description="Cytochrome b">
    <location>
        <begin position="1"/>
        <end position="379"/>
    </location>
</feature>
<feature type="transmembrane region" description="Helical" evidence="2">
    <location>
        <begin position="33"/>
        <end position="53"/>
    </location>
</feature>
<feature type="transmembrane region" description="Helical" evidence="2">
    <location>
        <begin position="77"/>
        <end position="98"/>
    </location>
</feature>
<feature type="transmembrane region" description="Helical" evidence="2">
    <location>
        <begin position="113"/>
        <end position="133"/>
    </location>
</feature>
<feature type="transmembrane region" description="Helical" evidence="2">
    <location>
        <begin position="178"/>
        <end position="198"/>
    </location>
</feature>
<feature type="transmembrane region" description="Helical" evidence="2">
    <location>
        <begin position="226"/>
        <end position="246"/>
    </location>
</feature>
<feature type="transmembrane region" description="Helical" evidence="2">
    <location>
        <begin position="288"/>
        <end position="308"/>
    </location>
</feature>
<feature type="transmembrane region" description="Helical" evidence="2">
    <location>
        <begin position="320"/>
        <end position="340"/>
    </location>
</feature>
<feature type="transmembrane region" description="Helical" evidence="2">
    <location>
        <begin position="347"/>
        <end position="367"/>
    </location>
</feature>
<feature type="binding site" description="axial binding residue" evidence="2">
    <location>
        <position position="83"/>
    </location>
    <ligand>
        <name>heme b</name>
        <dbReference type="ChEBI" id="CHEBI:60344"/>
        <label>b562</label>
    </ligand>
    <ligandPart>
        <name>Fe</name>
        <dbReference type="ChEBI" id="CHEBI:18248"/>
    </ligandPart>
</feature>
<feature type="binding site" description="axial binding residue" evidence="2">
    <location>
        <position position="97"/>
    </location>
    <ligand>
        <name>heme b</name>
        <dbReference type="ChEBI" id="CHEBI:60344"/>
        <label>b566</label>
    </ligand>
    <ligandPart>
        <name>Fe</name>
        <dbReference type="ChEBI" id="CHEBI:18248"/>
    </ligandPart>
</feature>
<feature type="binding site" description="axial binding residue" evidence="2">
    <location>
        <position position="182"/>
    </location>
    <ligand>
        <name>heme b</name>
        <dbReference type="ChEBI" id="CHEBI:60344"/>
        <label>b562</label>
    </ligand>
    <ligandPart>
        <name>Fe</name>
        <dbReference type="ChEBI" id="CHEBI:18248"/>
    </ligandPart>
</feature>
<feature type="binding site" description="axial binding residue" evidence="2">
    <location>
        <position position="196"/>
    </location>
    <ligand>
        <name>heme b</name>
        <dbReference type="ChEBI" id="CHEBI:60344"/>
        <label>b566</label>
    </ligand>
    <ligandPart>
        <name>Fe</name>
        <dbReference type="ChEBI" id="CHEBI:18248"/>
    </ligandPart>
</feature>
<feature type="binding site" evidence="2">
    <location>
        <position position="201"/>
    </location>
    <ligand>
        <name>a ubiquinone</name>
        <dbReference type="ChEBI" id="CHEBI:16389"/>
    </ligand>
</feature>
<sequence>MTILRKTHPLMKIVNHAFIDLPAPSNISGWWNFGSLLGLCLIIQIVSGLFLAMHYTPDTLTAFSSVTHICRDVNYGWLIRNMHANGASLFFICLYLHIGRGIYYGSYTYMETWNIGIILLFLVMATAFMGYVLPWGQMSFWGATVITNLLSAIPYIGTDLVEWIWGGFSVDKATLNRFFAFHFILPFIIAAMAMVHLLFLHETGSNNPLGIPSDSDKIPFHPYYTSKDLLGVIIILVLFXSLVLFSPDLLGDPDNYSPANPLNTPPHIKPEWYFLFAYAILRSIPNKLGGVVALVLSILILALFPHIQTANQRSLMFRPISQFLFWLLVSDVLILTWIGGQPVEPPFIIIGQIASILYFLIILALMPIAGLIENKLLKW</sequence>
<proteinExistence type="inferred from homology"/>
<reference key="1">
    <citation type="journal article" date="2005" name="J. Mammal.">
        <title>Phylogenetics of the new world rodent family Heteromyidae.</title>
        <authorList>
            <person name="Alexander L.F."/>
            <person name="Riddle B.R."/>
        </authorList>
    </citation>
    <scope>NUCLEOTIDE SEQUENCE [GENOMIC DNA]</scope>
    <source>
        <strain>Isolate LVT 1573</strain>
    </source>
</reference>
<organism>
    <name type="scientific">Microdipodops pallidus</name>
    <name type="common">Pale kangaroo mouse</name>
    <dbReference type="NCBI Taxonomy" id="323371"/>
    <lineage>
        <taxon>Eukaryota</taxon>
        <taxon>Metazoa</taxon>
        <taxon>Chordata</taxon>
        <taxon>Craniata</taxon>
        <taxon>Vertebrata</taxon>
        <taxon>Euteleostomi</taxon>
        <taxon>Mammalia</taxon>
        <taxon>Eutheria</taxon>
        <taxon>Euarchontoglires</taxon>
        <taxon>Glires</taxon>
        <taxon>Rodentia</taxon>
        <taxon>Castorimorpha</taxon>
        <taxon>Heteromyidae</taxon>
        <taxon>Dipodomyinae</taxon>
        <taxon>Microdipodops</taxon>
    </lineage>
</organism>
<accession>Q508P2</accession>
<evidence type="ECO:0000250" key="1"/>
<evidence type="ECO:0000250" key="2">
    <source>
        <dbReference type="UniProtKB" id="P00157"/>
    </source>
</evidence>
<evidence type="ECO:0000255" key="3">
    <source>
        <dbReference type="PROSITE-ProRule" id="PRU00967"/>
    </source>
</evidence>
<evidence type="ECO:0000255" key="4">
    <source>
        <dbReference type="PROSITE-ProRule" id="PRU00968"/>
    </source>
</evidence>
<dbReference type="EMBL" id="AY926361">
    <property type="protein sequence ID" value="AAY23204.1"/>
    <property type="molecule type" value="Genomic_DNA"/>
</dbReference>
<dbReference type="GO" id="GO:0005743">
    <property type="term" value="C:mitochondrial inner membrane"/>
    <property type="evidence" value="ECO:0007669"/>
    <property type="project" value="UniProtKB-SubCell"/>
</dbReference>
<dbReference type="GO" id="GO:0045275">
    <property type="term" value="C:respiratory chain complex III"/>
    <property type="evidence" value="ECO:0007669"/>
    <property type="project" value="InterPro"/>
</dbReference>
<dbReference type="GO" id="GO:0046872">
    <property type="term" value="F:metal ion binding"/>
    <property type="evidence" value="ECO:0007669"/>
    <property type="project" value="UniProtKB-KW"/>
</dbReference>
<dbReference type="GO" id="GO:0008121">
    <property type="term" value="F:ubiquinol-cytochrome-c reductase activity"/>
    <property type="evidence" value="ECO:0007669"/>
    <property type="project" value="InterPro"/>
</dbReference>
<dbReference type="GO" id="GO:0006122">
    <property type="term" value="P:mitochondrial electron transport, ubiquinol to cytochrome c"/>
    <property type="evidence" value="ECO:0007669"/>
    <property type="project" value="TreeGrafter"/>
</dbReference>
<dbReference type="CDD" id="cd00290">
    <property type="entry name" value="cytochrome_b_C"/>
    <property type="match status" value="1"/>
</dbReference>
<dbReference type="CDD" id="cd00284">
    <property type="entry name" value="Cytochrome_b_N"/>
    <property type="match status" value="1"/>
</dbReference>
<dbReference type="FunFam" id="1.20.810.10:FF:000002">
    <property type="entry name" value="Cytochrome b"/>
    <property type="match status" value="1"/>
</dbReference>
<dbReference type="Gene3D" id="1.20.810.10">
    <property type="entry name" value="Cytochrome Bc1 Complex, Chain C"/>
    <property type="match status" value="1"/>
</dbReference>
<dbReference type="InterPro" id="IPR005798">
    <property type="entry name" value="Cyt_b/b6_C"/>
</dbReference>
<dbReference type="InterPro" id="IPR036150">
    <property type="entry name" value="Cyt_b/b6_C_sf"/>
</dbReference>
<dbReference type="InterPro" id="IPR005797">
    <property type="entry name" value="Cyt_b/b6_N"/>
</dbReference>
<dbReference type="InterPro" id="IPR027387">
    <property type="entry name" value="Cytb/b6-like_sf"/>
</dbReference>
<dbReference type="InterPro" id="IPR030689">
    <property type="entry name" value="Cytochrome_b"/>
</dbReference>
<dbReference type="InterPro" id="IPR048260">
    <property type="entry name" value="Cytochrome_b_C_euk/bac"/>
</dbReference>
<dbReference type="InterPro" id="IPR048259">
    <property type="entry name" value="Cytochrome_b_N_euk/bac"/>
</dbReference>
<dbReference type="InterPro" id="IPR016174">
    <property type="entry name" value="Di-haem_cyt_TM"/>
</dbReference>
<dbReference type="PANTHER" id="PTHR19271">
    <property type="entry name" value="CYTOCHROME B"/>
    <property type="match status" value="1"/>
</dbReference>
<dbReference type="PANTHER" id="PTHR19271:SF16">
    <property type="entry name" value="CYTOCHROME B"/>
    <property type="match status" value="1"/>
</dbReference>
<dbReference type="Pfam" id="PF00032">
    <property type="entry name" value="Cytochrom_B_C"/>
    <property type="match status" value="1"/>
</dbReference>
<dbReference type="Pfam" id="PF00033">
    <property type="entry name" value="Cytochrome_B"/>
    <property type="match status" value="1"/>
</dbReference>
<dbReference type="PIRSF" id="PIRSF038885">
    <property type="entry name" value="COB"/>
    <property type="match status" value="1"/>
</dbReference>
<dbReference type="SUPFAM" id="SSF81648">
    <property type="entry name" value="a domain/subunit of cytochrome bc1 complex (Ubiquinol-cytochrome c reductase)"/>
    <property type="match status" value="1"/>
</dbReference>
<dbReference type="SUPFAM" id="SSF81342">
    <property type="entry name" value="Transmembrane di-heme cytochromes"/>
    <property type="match status" value="1"/>
</dbReference>
<dbReference type="PROSITE" id="PS51003">
    <property type="entry name" value="CYTB_CTER"/>
    <property type="match status" value="1"/>
</dbReference>
<dbReference type="PROSITE" id="PS51002">
    <property type="entry name" value="CYTB_NTER"/>
    <property type="match status" value="1"/>
</dbReference>
<name>CYB_MICPA</name>
<keyword id="KW-0249">Electron transport</keyword>
<keyword id="KW-0349">Heme</keyword>
<keyword id="KW-0408">Iron</keyword>
<keyword id="KW-0472">Membrane</keyword>
<keyword id="KW-0479">Metal-binding</keyword>
<keyword id="KW-0496">Mitochondrion</keyword>
<keyword id="KW-0999">Mitochondrion inner membrane</keyword>
<keyword id="KW-0679">Respiratory chain</keyword>
<keyword id="KW-0812">Transmembrane</keyword>
<keyword id="KW-1133">Transmembrane helix</keyword>
<keyword id="KW-0813">Transport</keyword>
<keyword id="KW-0830">Ubiquinone</keyword>
<comment type="function">
    <text evidence="2">Component of the ubiquinol-cytochrome c reductase complex (complex III or cytochrome b-c1 complex) that is part of the mitochondrial respiratory chain. The b-c1 complex mediates electron transfer from ubiquinol to cytochrome c. Contributes to the generation of a proton gradient across the mitochondrial membrane that is then used for ATP synthesis.</text>
</comment>
<comment type="cofactor">
    <cofactor evidence="2">
        <name>heme b</name>
        <dbReference type="ChEBI" id="CHEBI:60344"/>
    </cofactor>
    <text evidence="2">Binds 2 heme b groups non-covalently.</text>
</comment>
<comment type="subunit">
    <text evidence="2">The cytochrome bc1 complex contains 11 subunits: 3 respiratory subunits (MT-CYB, CYC1 and UQCRFS1), 2 core proteins (UQCRC1 and UQCRC2) and 6 low-molecular weight proteins (UQCRH/QCR6, UQCRB/QCR7, UQCRQ/QCR8, UQCR10/QCR9, UQCR11/QCR10 and a cleavage product of UQCRFS1). This cytochrome bc1 complex then forms a dimer.</text>
</comment>
<comment type="subcellular location">
    <subcellularLocation>
        <location evidence="2">Mitochondrion inner membrane</location>
        <topology evidence="2">Multi-pass membrane protein</topology>
    </subcellularLocation>
</comment>
<comment type="miscellaneous">
    <text evidence="1">Heme 1 (or BL or b562) is low-potential and absorbs at about 562 nm, and heme 2 (or BH or b566) is high-potential and absorbs at about 566 nm.</text>
</comment>
<comment type="similarity">
    <text evidence="3 4">Belongs to the cytochrome b family.</text>
</comment>
<comment type="caution">
    <text evidence="2">The full-length protein contains only eight transmembrane helices, not nine as predicted by bioinformatics tools.</text>
</comment>